<keyword id="KW-0067">ATP-binding</keyword>
<keyword id="KW-0436">Ligase</keyword>
<keyword id="KW-0547">Nucleotide-binding</keyword>
<keyword id="KW-0648">Protein biosynthesis</keyword>
<name>GATB_STRP3</name>
<reference key="1">
    <citation type="journal article" date="2002" name="Proc. Natl. Acad. Sci. U.S.A.">
        <title>Genome sequence of a serotype M3 strain of group A Streptococcus: phage-encoded toxins, the high-virulence phenotype, and clone emergence.</title>
        <authorList>
            <person name="Beres S.B."/>
            <person name="Sylva G.L."/>
            <person name="Barbian K.D."/>
            <person name="Lei B."/>
            <person name="Hoff J.S."/>
            <person name="Mammarella N.D."/>
            <person name="Liu M.-Y."/>
            <person name="Smoot J.C."/>
            <person name="Porcella S.F."/>
            <person name="Parkins L.D."/>
            <person name="Campbell D.S."/>
            <person name="Smith T.M."/>
            <person name="McCormick J.K."/>
            <person name="Leung D.Y.M."/>
            <person name="Schlievert P.M."/>
            <person name="Musser J.M."/>
        </authorList>
    </citation>
    <scope>NUCLEOTIDE SEQUENCE [LARGE SCALE GENOMIC DNA]</scope>
    <source>
        <strain>ATCC BAA-595 / MGAS315</strain>
    </source>
</reference>
<feature type="chain" id="PRO_0000148851" description="Aspartyl/glutamyl-tRNA(Asn/Gln) amidotransferase subunit B">
    <location>
        <begin position="1"/>
        <end position="479"/>
    </location>
</feature>
<dbReference type="EC" id="6.3.5.-" evidence="1"/>
<dbReference type="EMBL" id="AE014074">
    <property type="protein sequence ID" value="AAM80146.1"/>
    <property type="molecule type" value="Genomic_DNA"/>
</dbReference>
<dbReference type="RefSeq" id="WP_011054945.1">
    <property type="nucleotide sequence ID" value="NC_004070.1"/>
</dbReference>
<dbReference type="SMR" id="P0DB26"/>
<dbReference type="GeneID" id="69900386"/>
<dbReference type="KEGG" id="spg:SpyM3_1539"/>
<dbReference type="HOGENOM" id="CLU_019240_0_0_9"/>
<dbReference type="Proteomes" id="UP000000564">
    <property type="component" value="Chromosome"/>
</dbReference>
<dbReference type="GO" id="GO:0050566">
    <property type="term" value="F:asparaginyl-tRNA synthase (glutamine-hydrolyzing) activity"/>
    <property type="evidence" value="ECO:0007669"/>
    <property type="project" value="RHEA"/>
</dbReference>
<dbReference type="GO" id="GO:0005524">
    <property type="term" value="F:ATP binding"/>
    <property type="evidence" value="ECO:0007669"/>
    <property type="project" value="UniProtKB-KW"/>
</dbReference>
<dbReference type="GO" id="GO:0050567">
    <property type="term" value="F:glutaminyl-tRNA synthase (glutamine-hydrolyzing) activity"/>
    <property type="evidence" value="ECO:0007669"/>
    <property type="project" value="UniProtKB-UniRule"/>
</dbReference>
<dbReference type="GO" id="GO:0070681">
    <property type="term" value="P:glutaminyl-tRNAGln biosynthesis via transamidation"/>
    <property type="evidence" value="ECO:0007669"/>
    <property type="project" value="TreeGrafter"/>
</dbReference>
<dbReference type="GO" id="GO:0006412">
    <property type="term" value="P:translation"/>
    <property type="evidence" value="ECO:0007669"/>
    <property type="project" value="UniProtKB-UniRule"/>
</dbReference>
<dbReference type="FunFam" id="1.10.10.410:FF:000001">
    <property type="entry name" value="Aspartyl/glutamyl-tRNA(Asn/Gln) amidotransferase subunit B"/>
    <property type="match status" value="1"/>
</dbReference>
<dbReference type="FunFam" id="1.10.150.380:FF:000001">
    <property type="entry name" value="Aspartyl/glutamyl-tRNA(Asn/Gln) amidotransferase subunit B"/>
    <property type="match status" value="1"/>
</dbReference>
<dbReference type="Gene3D" id="1.10.10.410">
    <property type="match status" value="1"/>
</dbReference>
<dbReference type="Gene3D" id="1.10.150.380">
    <property type="entry name" value="GatB domain, N-terminal subdomain"/>
    <property type="match status" value="1"/>
</dbReference>
<dbReference type="HAMAP" id="MF_00121">
    <property type="entry name" value="GatB"/>
    <property type="match status" value="1"/>
</dbReference>
<dbReference type="InterPro" id="IPR017959">
    <property type="entry name" value="Asn/Gln-tRNA_amidoTrfase_suB/E"/>
</dbReference>
<dbReference type="InterPro" id="IPR006075">
    <property type="entry name" value="Asn/Gln-tRNA_Trfase_suB/E_cat"/>
</dbReference>
<dbReference type="InterPro" id="IPR018027">
    <property type="entry name" value="Asn/Gln_amidotransferase"/>
</dbReference>
<dbReference type="InterPro" id="IPR003789">
    <property type="entry name" value="Asn/Gln_tRNA_amidoTrase-B-like"/>
</dbReference>
<dbReference type="InterPro" id="IPR004413">
    <property type="entry name" value="GatB"/>
</dbReference>
<dbReference type="InterPro" id="IPR042114">
    <property type="entry name" value="GatB_C_1"/>
</dbReference>
<dbReference type="InterPro" id="IPR023168">
    <property type="entry name" value="GatB_Yqey_C_2"/>
</dbReference>
<dbReference type="InterPro" id="IPR017958">
    <property type="entry name" value="Gln-tRNA_amidoTrfase_suB_CS"/>
</dbReference>
<dbReference type="InterPro" id="IPR014746">
    <property type="entry name" value="Gln_synth/guanido_kin_cat_dom"/>
</dbReference>
<dbReference type="NCBIfam" id="TIGR00133">
    <property type="entry name" value="gatB"/>
    <property type="match status" value="1"/>
</dbReference>
<dbReference type="NCBIfam" id="NF004011">
    <property type="entry name" value="PRK05477.1-1"/>
    <property type="match status" value="1"/>
</dbReference>
<dbReference type="NCBIfam" id="NF004012">
    <property type="entry name" value="PRK05477.1-2"/>
    <property type="match status" value="1"/>
</dbReference>
<dbReference type="NCBIfam" id="NF004014">
    <property type="entry name" value="PRK05477.1-4"/>
    <property type="match status" value="1"/>
</dbReference>
<dbReference type="PANTHER" id="PTHR11659">
    <property type="entry name" value="GLUTAMYL-TRNA GLN AMIDOTRANSFERASE SUBUNIT B MITOCHONDRIAL AND PROKARYOTIC PET112-RELATED"/>
    <property type="match status" value="1"/>
</dbReference>
<dbReference type="PANTHER" id="PTHR11659:SF0">
    <property type="entry name" value="GLUTAMYL-TRNA(GLN) AMIDOTRANSFERASE SUBUNIT B, MITOCHONDRIAL"/>
    <property type="match status" value="1"/>
</dbReference>
<dbReference type="Pfam" id="PF02934">
    <property type="entry name" value="GatB_N"/>
    <property type="match status" value="1"/>
</dbReference>
<dbReference type="Pfam" id="PF02637">
    <property type="entry name" value="GatB_Yqey"/>
    <property type="match status" value="1"/>
</dbReference>
<dbReference type="SMART" id="SM00845">
    <property type="entry name" value="GatB_Yqey"/>
    <property type="match status" value="1"/>
</dbReference>
<dbReference type="SUPFAM" id="SSF89095">
    <property type="entry name" value="GatB/YqeY motif"/>
    <property type="match status" value="1"/>
</dbReference>
<dbReference type="SUPFAM" id="SSF55931">
    <property type="entry name" value="Glutamine synthetase/guanido kinase"/>
    <property type="match status" value="1"/>
</dbReference>
<dbReference type="PROSITE" id="PS01234">
    <property type="entry name" value="GATB"/>
    <property type="match status" value="1"/>
</dbReference>
<comment type="function">
    <text evidence="1">Allows the formation of correctly charged Asn-tRNA(Asn) or Gln-tRNA(Gln) through the transamidation of misacylated Asp-tRNA(Asn) or Glu-tRNA(Gln) in organisms which lack either or both of asparaginyl-tRNA or glutaminyl-tRNA synthetases. The reaction takes place in the presence of glutamine and ATP through an activated phospho-Asp-tRNA(Asn) or phospho-Glu-tRNA(Gln).</text>
</comment>
<comment type="catalytic activity">
    <reaction evidence="1">
        <text>L-glutamyl-tRNA(Gln) + L-glutamine + ATP + H2O = L-glutaminyl-tRNA(Gln) + L-glutamate + ADP + phosphate + H(+)</text>
        <dbReference type="Rhea" id="RHEA:17521"/>
        <dbReference type="Rhea" id="RHEA-COMP:9681"/>
        <dbReference type="Rhea" id="RHEA-COMP:9684"/>
        <dbReference type="ChEBI" id="CHEBI:15377"/>
        <dbReference type="ChEBI" id="CHEBI:15378"/>
        <dbReference type="ChEBI" id="CHEBI:29985"/>
        <dbReference type="ChEBI" id="CHEBI:30616"/>
        <dbReference type="ChEBI" id="CHEBI:43474"/>
        <dbReference type="ChEBI" id="CHEBI:58359"/>
        <dbReference type="ChEBI" id="CHEBI:78520"/>
        <dbReference type="ChEBI" id="CHEBI:78521"/>
        <dbReference type="ChEBI" id="CHEBI:456216"/>
    </reaction>
</comment>
<comment type="catalytic activity">
    <reaction evidence="1">
        <text>L-aspartyl-tRNA(Asn) + L-glutamine + ATP + H2O = L-asparaginyl-tRNA(Asn) + L-glutamate + ADP + phosphate + 2 H(+)</text>
        <dbReference type="Rhea" id="RHEA:14513"/>
        <dbReference type="Rhea" id="RHEA-COMP:9674"/>
        <dbReference type="Rhea" id="RHEA-COMP:9677"/>
        <dbReference type="ChEBI" id="CHEBI:15377"/>
        <dbReference type="ChEBI" id="CHEBI:15378"/>
        <dbReference type="ChEBI" id="CHEBI:29985"/>
        <dbReference type="ChEBI" id="CHEBI:30616"/>
        <dbReference type="ChEBI" id="CHEBI:43474"/>
        <dbReference type="ChEBI" id="CHEBI:58359"/>
        <dbReference type="ChEBI" id="CHEBI:78515"/>
        <dbReference type="ChEBI" id="CHEBI:78516"/>
        <dbReference type="ChEBI" id="CHEBI:456216"/>
    </reaction>
</comment>
<comment type="subunit">
    <text evidence="1">Heterotrimer of A, B and C subunits.</text>
</comment>
<comment type="similarity">
    <text evidence="1">Belongs to the GatB/GatE family. GatB subfamily.</text>
</comment>
<organism>
    <name type="scientific">Streptococcus pyogenes serotype M3 (strain ATCC BAA-595 / MGAS315)</name>
    <dbReference type="NCBI Taxonomy" id="198466"/>
    <lineage>
        <taxon>Bacteria</taxon>
        <taxon>Bacillati</taxon>
        <taxon>Bacillota</taxon>
        <taxon>Bacilli</taxon>
        <taxon>Lactobacillales</taxon>
        <taxon>Streptococcaceae</taxon>
        <taxon>Streptococcus</taxon>
    </lineage>
</organism>
<proteinExistence type="inferred from homology"/>
<protein>
    <recommendedName>
        <fullName evidence="1">Aspartyl/glutamyl-tRNA(Asn/Gln) amidotransferase subunit B</fullName>
        <shortName evidence="1">Asp/Glu-ADT subunit B</shortName>
        <ecNumber evidence="1">6.3.5.-</ecNumber>
    </recommendedName>
</protein>
<evidence type="ECO:0000255" key="1">
    <source>
        <dbReference type="HAMAP-Rule" id="MF_00121"/>
    </source>
</evidence>
<accession>P0DB26</accession>
<accession>Q8K618</accession>
<sequence>MNFETIIGLEVHVELNTNSKIFSPSSAHFGEDPNANTNVIDWSFPGVLPVMNKGVIDAGIKAALALNMDIHKEMHFDRKNYFYPDNPKAYQISQFDEPIGYNGWIEIKLEDGSTKKIRIERAHLEEDAGKNTHGTDGYSYVDLNRQGVPLIEIVSEADMRSPEEAYAYLTALKEIIQYTGISDVKMEEGSMRVDANISLRPYGQEQFGTKTELKNLNSFSNVRKGLEFEVERQAKLLRSGGAIRQETRRYDEANKGTILMRVKEGAADYRYFPEPDLPLYEIDDAWIDEMRAQLPQFPAQRRAKYEEELGLSAYDASQLTATKALSDFFETAVSLGGDAKQVSNWLQGEVAQFLNAEGKTIEEIALTPENLVEMIAIIADGTISSKMAKKVFVHLAKNGGSARAYVEKAGLVQISDPAVLVPIIHQVFADNEAAVADFKSGKRNADKAFTGFLMKATKGQANPQVAQQLLAQELQKLRD</sequence>
<gene>
    <name evidence="1" type="primary">gatB</name>
    <name type="ordered locus">SpyM3_1539</name>
</gene>